<accession>A0L2D8</accession>
<name>LEXA_SHESA</name>
<proteinExistence type="inferred from homology"/>
<evidence type="ECO:0000255" key="1">
    <source>
        <dbReference type="HAMAP-Rule" id="MF_00015"/>
    </source>
</evidence>
<feature type="chain" id="PRO_1000001339" description="LexA repressor">
    <location>
        <begin position="1"/>
        <end position="206"/>
    </location>
</feature>
<feature type="DNA-binding region" description="H-T-H motif" evidence="1">
    <location>
        <begin position="28"/>
        <end position="48"/>
    </location>
</feature>
<feature type="active site" description="For autocatalytic cleavage activity" evidence="1">
    <location>
        <position position="123"/>
    </location>
</feature>
<feature type="active site" description="For autocatalytic cleavage activity" evidence="1">
    <location>
        <position position="160"/>
    </location>
</feature>
<feature type="site" description="Cleavage; by autolysis" evidence="1">
    <location>
        <begin position="88"/>
        <end position="89"/>
    </location>
</feature>
<dbReference type="EC" id="3.4.21.88" evidence="1"/>
<dbReference type="EMBL" id="CP000469">
    <property type="protein sequence ID" value="ABK50207.1"/>
    <property type="molecule type" value="Genomic_DNA"/>
</dbReference>
<dbReference type="RefSeq" id="WP_011718707.1">
    <property type="nucleotide sequence ID" value="NC_008577.1"/>
</dbReference>
<dbReference type="SMR" id="A0L2D8"/>
<dbReference type="STRING" id="94122.Shewana3_3989"/>
<dbReference type="MEROPS" id="S24.001"/>
<dbReference type="KEGG" id="shn:Shewana3_3989"/>
<dbReference type="eggNOG" id="COG1974">
    <property type="taxonomic scope" value="Bacteria"/>
</dbReference>
<dbReference type="HOGENOM" id="CLU_066192_45_3_6"/>
<dbReference type="OrthoDB" id="9802364at2"/>
<dbReference type="Proteomes" id="UP000002589">
    <property type="component" value="Chromosome"/>
</dbReference>
<dbReference type="GO" id="GO:0003677">
    <property type="term" value="F:DNA binding"/>
    <property type="evidence" value="ECO:0007669"/>
    <property type="project" value="UniProtKB-UniRule"/>
</dbReference>
<dbReference type="GO" id="GO:0004252">
    <property type="term" value="F:serine-type endopeptidase activity"/>
    <property type="evidence" value="ECO:0007669"/>
    <property type="project" value="UniProtKB-UniRule"/>
</dbReference>
<dbReference type="GO" id="GO:0006281">
    <property type="term" value="P:DNA repair"/>
    <property type="evidence" value="ECO:0007669"/>
    <property type="project" value="UniProtKB-UniRule"/>
</dbReference>
<dbReference type="GO" id="GO:0006260">
    <property type="term" value="P:DNA replication"/>
    <property type="evidence" value="ECO:0007669"/>
    <property type="project" value="UniProtKB-UniRule"/>
</dbReference>
<dbReference type="GO" id="GO:0045892">
    <property type="term" value="P:negative regulation of DNA-templated transcription"/>
    <property type="evidence" value="ECO:0007669"/>
    <property type="project" value="UniProtKB-UniRule"/>
</dbReference>
<dbReference type="GO" id="GO:0006508">
    <property type="term" value="P:proteolysis"/>
    <property type="evidence" value="ECO:0007669"/>
    <property type="project" value="InterPro"/>
</dbReference>
<dbReference type="GO" id="GO:0009432">
    <property type="term" value="P:SOS response"/>
    <property type="evidence" value="ECO:0007669"/>
    <property type="project" value="UniProtKB-UniRule"/>
</dbReference>
<dbReference type="CDD" id="cd06529">
    <property type="entry name" value="S24_LexA-like"/>
    <property type="match status" value="1"/>
</dbReference>
<dbReference type="FunFam" id="1.10.10.10:FF:000009">
    <property type="entry name" value="LexA repressor"/>
    <property type="match status" value="1"/>
</dbReference>
<dbReference type="FunFam" id="2.10.109.10:FF:000001">
    <property type="entry name" value="LexA repressor"/>
    <property type="match status" value="1"/>
</dbReference>
<dbReference type="Gene3D" id="2.10.109.10">
    <property type="entry name" value="Umud Fragment, subunit A"/>
    <property type="match status" value="1"/>
</dbReference>
<dbReference type="Gene3D" id="1.10.10.10">
    <property type="entry name" value="Winged helix-like DNA-binding domain superfamily/Winged helix DNA-binding domain"/>
    <property type="match status" value="1"/>
</dbReference>
<dbReference type="HAMAP" id="MF_00015">
    <property type="entry name" value="LexA"/>
    <property type="match status" value="1"/>
</dbReference>
<dbReference type="InterPro" id="IPR006200">
    <property type="entry name" value="LexA"/>
</dbReference>
<dbReference type="InterPro" id="IPR039418">
    <property type="entry name" value="LexA-like"/>
</dbReference>
<dbReference type="InterPro" id="IPR036286">
    <property type="entry name" value="LexA/Signal_pep-like_sf"/>
</dbReference>
<dbReference type="InterPro" id="IPR006199">
    <property type="entry name" value="LexA_DNA-bd_dom"/>
</dbReference>
<dbReference type="InterPro" id="IPR050077">
    <property type="entry name" value="LexA_repressor"/>
</dbReference>
<dbReference type="InterPro" id="IPR006197">
    <property type="entry name" value="Peptidase_S24_LexA"/>
</dbReference>
<dbReference type="InterPro" id="IPR015927">
    <property type="entry name" value="Peptidase_S24_S26A/B/C"/>
</dbReference>
<dbReference type="InterPro" id="IPR036388">
    <property type="entry name" value="WH-like_DNA-bd_sf"/>
</dbReference>
<dbReference type="InterPro" id="IPR036390">
    <property type="entry name" value="WH_DNA-bd_sf"/>
</dbReference>
<dbReference type="NCBIfam" id="TIGR00498">
    <property type="entry name" value="lexA"/>
    <property type="match status" value="1"/>
</dbReference>
<dbReference type="PANTHER" id="PTHR33516">
    <property type="entry name" value="LEXA REPRESSOR"/>
    <property type="match status" value="1"/>
</dbReference>
<dbReference type="PANTHER" id="PTHR33516:SF2">
    <property type="entry name" value="LEXA REPRESSOR-RELATED"/>
    <property type="match status" value="1"/>
</dbReference>
<dbReference type="Pfam" id="PF01726">
    <property type="entry name" value="LexA_DNA_bind"/>
    <property type="match status" value="1"/>
</dbReference>
<dbReference type="Pfam" id="PF00717">
    <property type="entry name" value="Peptidase_S24"/>
    <property type="match status" value="1"/>
</dbReference>
<dbReference type="PRINTS" id="PR00726">
    <property type="entry name" value="LEXASERPTASE"/>
</dbReference>
<dbReference type="SUPFAM" id="SSF51306">
    <property type="entry name" value="LexA/Signal peptidase"/>
    <property type="match status" value="1"/>
</dbReference>
<dbReference type="SUPFAM" id="SSF46785">
    <property type="entry name" value="Winged helix' DNA-binding domain"/>
    <property type="match status" value="1"/>
</dbReference>
<sequence>MRPLTPRQAEILELIKRNIAETGMPPTRAEIATRLGFKSANAAEEHLKALAKKGCIEIMPGTSRGIRLPVEEEDNSESGLPLIGQVAAGEPILAQEHVEQYYQVDPSMFHPAANFLLRVRGDSMKNIGILEGDLLAVHKVQQARNGQVVVARVDDDVTVKRFEKKGNLVYLHAENEDYSPIKVDLSFQSLTIEGLAVGVIRNGDWL</sequence>
<keyword id="KW-0068">Autocatalytic cleavage</keyword>
<keyword id="KW-0227">DNA damage</keyword>
<keyword id="KW-0234">DNA repair</keyword>
<keyword id="KW-0235">DNA replication</keyword>
<keyword id="KW-0238">DNA-binding</keyword>
<keyword id="KW-0378">Hydrolase</keyword>
<keyword id="KW-0678">Repressor</keyword>
<keyword id="KW-0742">SOS response</keyword>
<keyword id="KW-0804">Transcription</keyword>
<keyword id="KW-0805">Transcription regulation</keyword>
<reference key="1">
    <citation type="submission" date="2006-09" db="EMBL/GenBank/DDBJ databases">
        <title>Complete sequence of chromosome 1 of Shewanella sp. ANA-3.</title>
        <authorList>
            <person name="Copeland A."/>
            <person name="Lucas S."/>
            <person name="Lapidus A."/>
            <person name="Barry K."/>
            <person name="Detter J.C."/>
            <person name="Glavina del Rio T."/>
            <person name="Hammon N."/>
            <person name="Israni S."/>
            <person name="Dalin E."/>
            <person name="Tice H."/>
            <person name="Pitluck S."/>
            <person name="Chertkov O."/>
            <person name="Brettin T."/>
            <person name="Bruce D."/>
            <person name="Han C."/>
            <person name="Tapia R."/>
            <person name="Gilna P."/>
            <person name="Schmutz J."/>
            <person name="Larimer F."/>
            <person name="Land M."/>
            <person name="Hauser L."/>
            <person name="Kyrpides N."/>
            <person name="Kim E."/>
            <person name="Newman D."/>
            <person name="Salticov C."/>
            <person name="Konstantinidis K."/>
            <person name="Klappenback J."/>
            <person name="Tiedje J."/>
            <person name="Richardson P."/>
        </authorList>
    </citation>
    <scope>NUCLEOTIDE SEQUENCE [LARGE SCALE GENOMIC DNA]</scope>
    <source>
        <strain>ANA-3</strain>
    </source>
</reference>
<comment type="function">
    <text evidence="1">Represses a number of genes involved in the response to DNA damage (SOS response), including recA and lexA. In the presence of single-stranded DNA, RecA interacts with LexA causing an autocatalytic cleavage which disrupts the DNA-binding part of LexA, leading to derepression of the SOS regulon and eventually DNA repair.</text>
</comment>
<comment type="catalytic activity">
    <reaction evidence="1">
        <text>Hydrolysis of Ala-|-Gly bond in repressor LexA.</text>
        <dbReference type="EC" id="3.4.21.88"/>
    </reaction>
</comment>
<comment type="subunit">
    <text evidence="1">Homodimer.</text>
</comment>
<comment type="similarity">
    <text evidence="1">Belongs to the peptidase S24 family.</text>
</comment>
<gene>
    <name evidence="1" type="primary">lexA</name>
    <name type="ordered locus">Shewana3_3989</name>
</gene>
<organism>
    <name type="scientific">Shewanella sp. (strain ANA-3)</name>
    <dbReference type="NCBI Taxonomy" id="94122"/>
    <lineage>
        <taxon>Bacteria</taxon>
        <taxon>Pseudomonadati</taxon>
        <taxon>Pseudomonadota</taxon>
        <taxon>Gammaproteobacteria</taxon>
        <taxon>Alteromonadales</taxon>
        <taxon>Shewanellaceae</taxon>
        <taxon>Shewanella</taxon>
    </lineage>
</organism>
<protein>
    <recommendedName>
        <fullName evidence="1">LexA repressor</fullName>
        <ecNumber evidence="1">3.4.21.88</ecNumber>
    </recommendedName>
</protein>